<accession>Q97Y16</accession>
<keyword id="KW-0223">Dioxygenase</keyword>
<keyword id="KW-0408">Iron</keyword>
<keyword id="KW-0479">Metal-binding</keyword>
<keyword id="KW-0560">Oxidoreductase</keyword>
<keyword id="KW-1185">Reference proteome</keyword>
<sequence length="384" mass="44562">MVFYHRQGELPKKRHTVFMKDGKLMREEVFGLNGFNGRYSLLYHLNPPTRIMKLGEWKSNTIGEWKDAEYRHHKLSTSKLRKSSDVFLDRIALIFNDNLIISFSKVDEGDTKLFYRNADFDEIYYVHSGEILFKSVFGEIEVKEGDYLVIPRGTTYTLSFKKNAELFIIEGKQIEVPKDYRNEYGQLVEGSFYYNRDLKLPVLRTYDENGNYKLVIKTVNGFQLVELDTHPFDVVGWDGYLYPFALSVYDLEPITGKLHQPPTAYTTFAADDFVVCTFVPRLFDYHPQSVPISYYHNNIDAEEIIFYSSGQFMSRRGINKGDITLHRGGHIHGPQPSAVEASLNKRGTYNDEVAIMVETQKRVKVSIYAKEIDDPTYPLSWYTS</sequence>
<comment type="cofactor">
    <cofactor evidence="1">
        <name>Fe cation</name>
        <dbReference type="ChEBI" id="CHEBI:24875"/>
    </cofactor>
</comment>
<comment type="similarity">
    <text evidence="2">Belongs to the homogentisate dioxygenase family.</text>
</comment>
<gene>
    <name type="ordered locus">SSO1533</name>
</gene>
<evidence type="ECO:0000250" key="1"/>
<evidence type="ECO:0000305" key="2"/>
<feature type="chain" id="PRO_0000220260" description="Putative dioxygenase SSO1533">
    <location>
        <begin position="1"/>
        <end position="384"/>
    </location>
</feature>
<feature type="binding site" evidence="1">
    <location>
        <position position="296"/>
    </location>
    <ligand>
        <name>Fe cation</name>
        <dbReference type="ChEBI" id="CHEBI:24875"/>
    </ligand>
</feature>
<feature type="binding site" evidence="1">
    <location>
        <position position="302"/>
    </location>
    <ligand>
        <name>Fe cation</name>
        <dbReference type="ChEBI" id="CHEBI:24875"/>
    </ligand>
</feature>
<feature type="binding site" evidence="1">
    <location>
        <position position="332"/>
    </location>
    <ligand>
        <name>Fe cation</name>
        <dbReference type="ChEBI" id="CHEBI:24875"/>
    </ligand>
</feature>
<protein>
    <recommendedName>
        <fullName>Putative dioxygenase SSO1533</fullName>
        <ecNumber>1.13.-.-</ecNumber>
    </recommendedName>
</protein>
<reference key="1">
    <citation type="journal article" date="2001" name="Proc. Natl. Acad. Sci. U.S.A.">
        <title>The complete genome of the crenarchaeon Sulfolobus solfataricus P2.</title>
        <authorList>
            <person name="She Q."/>
            <person name="Singh R.K."/>
            <person name="Confalonieri F."/>
            <person name="Zivanovic Y."/>
            <person name="Allard G."/>
            <person name="Awayez M.J."/>
            <person name="Chan-Weiher C.C.-Y."/>
            <person name="Clausen I.G."/>
            <person name="Curtis B.A."/>
            <person name="De Moors A."/>
            <person name="Erauso G."/>
            <person name="Fletcher C."/>
            <person name="Gordon P.M.K."/>
            <person name="Heikamp-de Jong I."/>
            <person name="Jeffries A.C."/>
            <person name="Kozera C.J."/>
            <person name="Medina N."/>
            <person name="Peng X."/>
            <person name="Thi-Ngoc H.P."/>
            <person name="Redder P."/>
            <person name="Schenk M.E."/>
            <person name="Theriault C."/>
            <person name="Tolstrup N."/>
            <person name="Charlebois R.L."/>
            <person name="Doolittle W.F."/>
            <person name="Duguet M."/>
            <person name="Gaasterland T."/>
            <person name="Garrett R.A."/>
            <person name="Ragan M.A."/>
            <person name="Sensen C.W."/>
            <person name="Van der Oost J."/>
        </authorList>
    </citation>
    <scope>NUCLEOTIDE SEQUENCE [LARGE SCALE GENOMIC DNA]</scope>
    <source>
        <strain>ATCC 35092 / DSM 1617 / JCM 11322 / P2</strain>
    </source>
</reference>
<proteinExistence type="inferred from homology"/>
<dbReference type="EC" id="1.13.-.-"/>
<dbReference type="EMBL" id="AE006641">
    <property type="protein sequence ID" value="AAK41755.1"/>
    <property type="molecule type" value="Genomic_DNA"/>
</dbReference>
<dbReference type="PIR" id="D90312">
    <property type="entry name" value="D90312"/>
</dbReference>
<dbReference type="RefSeq" id="WP_010923457.1">
    <property type="nucleotide sequence ID" value="NC_002754.1"/>
</dbReference>
<dbReference type="SMR" id="Q97Y16"/>
<dbReference type="FunCoup" id="Q97Y16">
    <property type="interactions" value="3"/>
</dbReference>
<dbReference type="STRING" id="273057.SSO1533"/>
<dbReference type="PaxDb" id="273057-SSO1533"/>
<dbReference type="DNASU" id="1454534"/>
<dbReference type="EnsemblBacteria" id="AAK41755">
    <property type="protein sequence ID" value="AAK41755"/>
    <property type="gene ID" value="SSO1533"/>
</dbReference>
<dbReference type="GeneID" id="1454534"/>
<dbReference type="KEGG" id="sso:SSO1533"/>
<dbReference type="PATRIC" id="fig|273057.12.peg.1572"/>
<dbReference type="eggNOG" id="arCOG06976">
    <property type="taxonomic scope" value="Archaea"/>
</dbReference>
<dbReference type="HOGENOM" id="CLU_053101_0_0_2"/>
<dbReference type="InParanoid" id="Q97Y16"/>
<dbReference type="PhylomeDB" id="Q97Y16"/>
<dbReference type="Proteomes" id="UP000001974">
    <property type="component" value="Chromosome"/>
</dbReference>
<dbReference type="GO" id="GO:0004411">
    <property type="term" value="F:homogentisate 1,2-dioxygenase activity"/>
    <property type="evidence" value="ECO:0000318"/>
    <property type="project" value="GO_Central"/>
</dbReference>
<dbReference type="GO" id="GO:0046872">
    <property type="term" value="F:metal ion binding"/>
    <property type="evidence" value="ECO:0007669"/>
    <property type="project" value="UniProtKB-KW"/>
</dbReference>
<dbReference type="GO" id="GO:0006559">
    <property type="term" value="P:L-phenylalanine catabolic process"/>
    <property type="evidence" value="ECO:0000318"/>
    <property type="project" value="GO_Central"/>
</dbReference>
<dbReference type="GO" id="GO:0006570">
    <property type="term" value="P:tyrosine metabolic process"/>
    <property type="evidence" value="ECO:0007669"/>
    <property type="project" value="InterPro"/>
</dbReference>
<dbReference type="CDD" id="cd02208">
    <property type="entry name" value="cupin_RmlC-like"/>
    <property type="match status" value="1"/>
</dbReference>
<dbReference type="Gene3D" id="2.60.120.10">
    <property type="entry name" value="Jelly Rolls"/>
    <property type="match status" value="1"/>
</dbReference>
<dbReference type="InterPro" id="IPR046451">
    <property type="entry name" value="HgmA_C"/>
</dbReference>
<dbReference type="InterPro" id="IPR046452">
    <property type="entry name" value="HgmA_N"/>
</dbReference>
<dbReference type="InterPro" id="IPR005708">
    <property type="entry name" value="Homogentis_dOase"/>
</dbReference>
<dbReference type="InterPro" id="IPR014710">
    <property type="entry name" value="RmlC-like_jellyroll"/>
</dbReference>
<dbReference type="InterPro" id="IPR011051">
    <property type="entry name" value="RmlC_Cupin_sf"/>
</dbReference>
<dbReference type="PANTHER" id="PTHR11056">
    <property type="entry name" value="HOMOGENTISATE 1,2-DIOXYGENASE"/>
    <property type="match status" value="1"/>
</dbReference>
<dbReference type="PANTHER" id="PTHR11056:SF0">
    <property type="entry name" value="HOMOGENTISATE 1,2-DIOXYGENASE"/>
    <property type="match status" value="1"/>
</dbReference>
<dbReference type="Pfam" id="PF04209">
    <property type="entry name" value="HgmA_C"/>
    <property type="match status" value="1"/>
</dbReference>
<dbReference type="Pfam" id="PF20510">
    <property type="entry name" value="HgmA_N"/>
    <property type="match status" value="1"/>
</dbReference>
<dbReference type="SUPFAM" id="SSF51182">
    <property type="entry name" value="RmlC-like cupins"/>
    <property type="match status" value="1"/>
</dbReference>
<name>Y1533_SACS2</name>
<organism>
    <name type="scientific">Saccharolobus solfataricus (strain ATCC 35092 / DSM 1617 / JCM 11322 / P2)</name>
    <name type="common">Sulfolobus solfataricus</name>
    <dbReference type="NCBI Taxonomy" id="273057"/>
    <lineage>
        <taxon>Archaea</taxon>
        <taxon>Thermoproteota</taxon>
        <taxon>Thermoprotei</taxon>
        <taxon>Sulfolobales</taxon>
        <taxon>Sulfolobaceae</taxon>
        <taxon>Saccharolobus</taxon>
    </lineage>
</organism>